<proteinExistence type="inferred from homology"/>
<comment type="subcellular location">
    <subcellularLocation>
        <location evidence="2">Nucleus</location>
    </subcellularLocation>
</comment>
<protein>
    <recommendedName>
        <fullName>Myb-like protein N</fullName>
    </recommendedName>
</protein>
<feature type="chain" id="PRO_0000328228" description="Myb-like protein N">
    <location>
        <begin position="1"/>
        <end position="577"/>
    </location>
</feature>
<feature type="domain" description="HTH myb-type 1" evidence="2">
    <location>
        <begin position="403"/>
        <end position="465"/>
    </location>
</feature>
<feature type="domain" description="HTH myb-type 2" evidence="2">
    <location>
        <begin position="466"/>
        <end position="517"/>
    </location>
</feature>
<feature type="domain" description="Myb-like" evidence="1">
    <location>
        <begin position="518"/>
        <end position="570"/>
    </location>
</feature>
<feature type="DNA-binding region" description="H-T-H motif" evidence="2">
    <location>
        <begin position="437"/>
        <end position="461"/>
    </location>
</feature>
<feature type="DNA-binding region" description="H-T-H motif" evidence="2">
    <location>
        <begin position="489"/>
        <end position="513"/>
    </location>
</feature>
<feature type="region of interest" description="Disordered" evidence="3">
    <location>
        <begin position="1"/>
        <end position="23"/>
    </location>
</feature>
<feature type="region of interest" description="Disordered" evidence="3">
    <location>
        <begin position="206"/>
        <end position="225"/>
    </location>
</feature>
<feature type="region of interest" description="Disordered" evidence="3">
    <location>
        <begin position="240"/>
        <end position="264"/>
    </location>
</feature>
<feature type="compositionally biased region" description="Low complexity" evidence="3">
    <location>
        <begin position="213"/>
        <end position="225"/>
    </location>
</feature>
<sequence length="577" mass="65962">MMTINNNNLNNSNNINNNNNIYTSNNNNNNNNYLIQTVPTMSETFDHMIETPQNDYISIHNHNQHNNHSPHQFYNNQYQHYQYTNDLIKLQPFCEINGQNDFQNSYQDPYQHQLSPPDMVGPYVNSYSNNSNNTNLIQNNNNQQLPSIITSPTIPLPPSPPSPTIINNSNNTISTIQFVNNKKRQHSDTTSSSSIYFIQQPHSTSTPFSLQCPNSPNSTSSSPLNSINYSYHPTFRVVTSSSSSASSSSTSSQPPSPQTLLSSSSISISNSSSFYNNTEASDEEMEEQFKEYLSPTISNLIESSHRENILNLVNDYLYEELPLKSLLMELREIQYQLGNGQNQSLLNNLIELFLILDNSSNVMINFLKENGVEDSEITIDQKRLSIILNDFENGLRGKDKTIKKSTSRGLRNPPNKWTKEESSKLITLVHENGDKQWKKIALQIGGGKTGAQCAQHWKRVLCPAIRKGSWDEEEEAKLFLLVEKHGQSWKNVASEIRTRTDIQCRYQYFKSCMSREVPWTPKEDEILQKKVIENKQDSTKEIGWMDLSKAMARARQTKIPRTALECKIRFYFLNAQL</sequence>
<organism>
    <name type="scientific">Dictyostelium discoideum</name>
    <name type="common">Social amoeba</name>
    <dbReference type="NCBI Taxonomy" id="44689"/>
    <lineage>
        <taxon>Eukaryota</taxon>
        <taxon>Amoebozoa</taxon>
        <taxon>Evosea</taxon>
        <taxon>Eumycetozoa</taxon>
        <taxon>Dictyostelia</taxon>
        <taxon>Dictyosteliales</taxon>
        <taxon>Dictyosteliaceae</taxon>
        <taxon>Dictyostelium</taxon>
    </lineage>
</organism>
<reference key="1">
    <citation type="journal article" date="2005" name="Nature">
        <title>The genome of the social amoeba Dictyostelium discoideum.</title>
        <authorList>
            <person name="Eichinger L."/>
            <person name="Pachebat J.A."/>
            <person name="Gloeckner G."/>
            <person name="Rajandream M.A."/>
            <person name="Sucgang R."/>
            <person name="Berriman M."/>
            <person name="Song J."/>
            <person name="Olsen R."/>
            <person name="Szafranski K."/>
            <person name="Xu Q."/>
            <person name="Tunggal B."/>
            <person name="Kummerfeld S."/>
            <person name="Madera M."/>
            <person name="Konfortov B.A."/>
            <person name="Rivero F."/>
            <person name="Bankier A.T."/>
            <person name="Lehmann R."/>
            <person name="Hamlin N."/>
            <person name="Davies R."/>
            <person name="Gaudet P."/>
            <person name="Fey P."/>
            <person name="Pilcher K."/>
            <person name="Chen G."/>
            <person name="Saunders D."/>
            <person name="Sodergren E.J."/>
            <person name="Davis P."/>
            <person name="Kerhornou A."/>
            <person name="Nie X."/>
            <person name="Hall N."/>
            <person name="Anjard C."/>
            <person name="Hemphill L."/>
            <person name="Bason N."/>
            <person name="Farbrother P."/>
            <person name="Desany B."/>
            <person name="Just E."/>
            <person name="Morio T."/>
            <person name="Rost R."/>
            <person name="Churcher C.M."/>
            <person name="Cooper J."/>
            <person name="Haydock S."/>
            <person name="van Driessche N."/>
            <person name="Cronin A."/>
            <person name="Goodhead I."/>
            <person name="Muzny D.M."/>
            <person name="Mourier T."/>
            <person name="Pain A."/>
            <person name="Lu M."/>
            <person name="Harper D."/>
            <person name="Lindsay R."/>
            <person name="Hauser H."/>
            <person name="James K.D."/>
            <person name="Quiles M."/>
            <person name="Madan Babu M."/>
            <person name="Saito T."/>
            <person name="Buchrieser C."/>
            <person name="Wardroper A."/>
            <person name="Felder M."/>
            <person name="Thangavelu M."/>
            <person name="Johnson D."/>
            <person name="Knights A."/>
            <person name="Loulseged H."/>
            <person name="Mungall K.L."/>
            <person name="Oliver K."/>
            <person name="Price C."/>
            <person name="Quail M.A."/>
            <person name="Urushihara H."/>
            <person name="Hernandez J."/>
            <person name="Rabbinowitsch E."/>
            <person name="Steffen D."/>
            <person name="Sanders M."/>
            <person name="Ma J."/>
            <person name="Kohara Y."/>
            <person name="Sharp S."/>
            <person name="Simmonds M.N."/>
            <person name="Spiegler S."/>
            <person name="Tivey A."/>
            <person name="Sugano S."/>
            <person name="White B."/>
            <person name="Walker D."/>
            <person name="Woodward J.R."/>
            <person name="Winckler T."/>
            <person name="Tanaka Y."/>
            <person name="Shaulsky G."/>
            <person name="Schleicher M."/>
            <person name="Weinstock G.M."/>
            <person name="Rosenthal A."/>
            <person name="Cox E.C."/>
            <person name="Chisholm R.L."/>
            <person name="Gibbs R.A."/>
            <person name="Loomis W.F."/>
            <person name="Platzer M."/>
            <person name="Kay R.R."/>
            <person name="Williams J.G."/>
            <person name="Dear P.H."/>
            <person name="Noegel A.A."/>
            <person name="Barrell B.G."/>
            <person name="Kuspa A."/>
        </authorList>
    </citation>
    <scope>NUCLEOTIDE SEQUENCE [LARGE SCALE GENOMIC DNA]</scope>
    <source>
        <strain>AX4</strain>
    </source>
</reference>
<accession>Q54CT1</accession>
<dbReference type="EMBL" id="AAFI02000196">
    <property type="protein sequence ID" value="EAL61065.1"/>
    <property type="molecule type" value="Genomic_DNA"/>
</dbReference>
<dbReference type="RefSeq" id="XP_629460.1">
    <property type="nucleotide sequence ID" value="XM_629458.1"/>
</dbReference>
<dbReference type="SMR" id="Q54CT1"/>
<dbReference type="FunCoup" id="Q54CT1">
    <property type="interactions" value="149"/>
</dbReference>
<dbReference type="STRING" id="44689.Q54CT1"/>
<dbReference type="PaxDb" id="44689-DDB0216340"/>
<dbReference type="EnsemblProtists" id="EAL61065">
    <property type="protein sequence ID" value="EAL61065"/>
    <property type="gene ID" value="DDB_G0292782"/>
</dbReference>
<dbReference type="GeneID" id="8628850"/>
<dbReference type="KEGG" id="ddi:DDB_G0292782"/>
<dbReference type="dictyBase" id="DDB_G0292782">
    <property type="gene designation" value="mybN"/>
</dbReference>
<dbReference type="VEuPathDB" id="AmoebaDB:DDB_G0292782"/>
<dbReference type="eggNOG" id="KOG0048">
    <property type="taxonomic scope" value="Eukaryota"/>
</dbReference>
<dbReference type="HOGENOM" id="CLU_472865_0_0_1"/>
<dbReference type="InParanoid" id="Q54CT1"/>
<dbReference type="PRO" id="PR:Q54CT1"/>
<dbReference type="Proteomes" id="UP000002195">
    <property type="component" value="Chromosome 6"/>
</dbReference>
<dbReference type="GO" id="GO:0005634">
    <property type="term" value="C:nucleus"/>
    <property type="evidence" value="ECO:0000318"/>
    <property type="project" value="GO_Central"/>
</dbReference>
<dbReference type="GO" id="GO:0000981">
    <property type="term" value="F:DNA-binding transcription factor activity, RNA polymerase II-specific"/>
    <property type="evidence" value="ECO:0000318"/>
    <property type="project" value="GO_Central"/>
</dbReference>
<dbReference type="GO" id="GO:0000978">
    <property type="term" value="F:RNA polymerase II cis-regulatory region sequence-specific DNA binding"/>
    <property type="evidence" value="ECO:0000318"/>
    <property type="project" value="GO_Central"/>
</dbReference>
<dbReference type="GO" id="GO:0048870">
    <property type="term" value="P:cell motility"/>
    <property type="evidence" value="ECO:0000316"/>
    <property type="project" value="dictyBase"/>
</dbReference>
<dbReference type="GO" id="GO:0006355">
    <property type="term" value="P:regulation of DNA-templated transcription"/>
    <property type="evidence" value="ECO:0000318"/>
    <property type="project" value="GO_Central"/>
</dbReference>
<dbReference type="CDD" id="cd00167">
    <property type="entry name" value="SANT"/>
    <property type="match status" value="2"/>
</dbReference>
<dbReference type="FunFam" id="1.10.10.60:FF:000697">
    <property type="entry name" value="Myb transcription factor"/>
    <property type="match status" value="1"/>
</dbReference>
<dbReference type="FunFam" id="1.10.10.60:FF:000563">
    <property type="entry name" value="Putative myb transcription factor"/>
    <property type="match status" value="1"/>
</dbReference>
<dbReference type="Gene3D" id="1.10.10.60">
    <property type="entry name" value="Homeodomain-like"/>
    <property type="match status" value="2"/>
</dbReference>
<dbReference type="InterPro" id="IPR009057">
    <property type="entry name" value="Homeodomain-like_sf"/>
</dbReference>
<dbReference type="InterPro" id="IPR051575">
    <property type="entry name" value="Myb-like_DNA-bd"/>
</dbReference>
<dbReference type="InterPro" id="IPR017930">
    <property type="entry name" value="Myb_dom"/>
</dbReference>
<dbReference type="InterPro" id="IPR001005">
    <property type="entry name" value="SANT/Myb"/>
</dbReference>
<dbReference type="PANTHER" id="PTHR46621">
    <property type="entry name" value="SNRNA-ACTIVATING PROTEIN COMPLEX SUBUNIT 4"/>
    <property type="match status" value="1"/>
</dbReference>
<dbReference type="PANTHER" id="PTHR46621:SF1">
    <property type="entry name" value="SNRNA-ACTIVATING PROTEIN COMPLEX SUBUNIT 4"/>
    <property type="match status" value="1"/>
</dbReference>
<dbReference type="Pfam" id="PF13921">
    <property type="entry name" value="Myb_DNA-bind_6"/>
    <property type="match status" value="1"/>
</dbReference>
<dbReference type="SMART" id="SM00717">
    <property type="entry name" value="SANT"/>
    <property type="match status" value="3"/>
</dbReference>
<dbReference type="SUPFAM" id="SSF46689">
    <property type="entry name" value="Homeodomain-like"/>
    <property type="match status" value="1"/>
</dbReference>
<dbReference type="PROSITE" id="PS51294">
    <property type="entry name" value="HTH_MYB"/>
    <property type="match status" value="2"/>
</dbReference>
<dbReference type="PROSITE" id="PS50090">
    <property type="entry name" value="MYB_LIKE"/>
    <property type="match status" value="1"/>
</dbReference>
<name>MYBN_DICDI</name>
<gene>
    <name type="primary">mybN</name>
    <name type="ORF">DDB_G0292782</name>
</gene>
<keyword id="KW-0238">DNA-binding</keyword>
<keyword id="KW-0539">Nucleus</keyword>
<keyword id="KW-1185">Reference proteome</keyword>
<keyword id="KW-0677">Repeat</keyword>
<keyword id="KW-0804">Transcription</keyword>
<keyword id="KW-0805">Transcription regulation</keyword>
<evidence type="ECO:0000255" key="1">
    <source>
        <dbReference type="PROSITE-ProRule" id="PRU00133"/>
    </source>
</evidence>
<evidence type="ECO:0000255" key="2">
    <source>
        <dbReference type="PROSITE-ProRule" id="PRU00625"/>
    </source>
</evidence>
<evidence type="ECO:0000256" key="3">
    <source>
        <dbReference type="SAM" id="MobiDB-lite"/>
    </source>
</evidence>